<keyword id="KW-0963">Cytoplasm</keyword>
<keyword id="KW-1185">Reference proteome</keyword>
<keyword id="KW-0704">Schiff base</keyword>
<keyword id="KW-0784">Thiamine biosynthesis</keyword>
<keyword id="KW-0808">Transferase</keyword>
<protein>
    <recommendedName>
        <fullName evidence="1">Thiazole synthase</fullName>
        <ecNumber evidence="1">2.8.1.10</ecNumber>
    </recommendedName>
</protein>
<reference key="1">
    <citation type="submission" date="2007-05" db="EMBL/GenBank/DDBJ databases">
        <title>Complete sequence of Geobacter uraniireducens Rf4.</title>
        <authorList>
            <consortium name="US DOE Joint Genome Institute"/>
            <person name="Copeland A."/>
            <person name="Lucas S."/>
            <person name="Lapidus A."/>
            <person name="Barry K."/>
            <person name="Detter J.C."/>
            <person name="Glavina del Rio T."/>
            <person name="Hammon N."/>
            <person name="Israni S."/>
            <person name="Dalin E."/>
            <person name="Tice H."/>
            <person name="Pitluck S."/>
            <person name="Chertkov O."/>
            <person name="Brettin T."/>
            <person name="Bruce D."/>
            <person name="Han C."/>
            <person name="Schmutz J."/>
            <person name="Larimer F."/>
            <person name="Land M."/>
            <person name="Hauser L."/>
            <person name="Kyrpides N."/>
            <person name="Mikhailova N."/>
            <person name="Shelobolina E."/>
            <person name="Aklujkar M."/>
            <person name="Lovley D."/>
            <person name="Richardson P."/>
        </authorList>
    </citation>
    <scope>NUCLEOTIDE SEQUENCE [LARGE SCALE GENOMIC DNA]</scope>
    <source>
        <strain>ATCC BAA-1134 / JCM 13001 / Rf4</strain>
    </source>
</reference>
<sequence length="260" mass="27867">MRTDTDKLIIAGREFNSRLMVGTGKYADFQQMVKAIEVSGAEIITVAVRRVNISDRNKESLLDHIDTKKYTLLPNTAGCYTADDAIRTCRLAREAGLSDFVKLEVLGDEKTLFPDNEELLKAAKVLIKEGFTVLPYTTDDPIVCKKLEDIGCAAVMPLGAPIGSGLGIRNPYNIRIILDTVKVPVIVDAGVGTASDAAIAMELGCHGVLMNTGIAGAKDPIAMAEAMNLAVRAGRLAYRAGRIPKKLYATASSPVEGTIE</sequence>
<feature type="chain" id="PRO_1000080870" description="Thiazole synthase">
    <location>
        <begin position="1"/>
        <end position="260"/>
    </location>
</feature>
<feature type="active site" description="Schiff-base intermediate with DXP" evidence="1">
    <location>
        <position position="102"/>
    </location>
</feature>
<feature type="binding site" evidence="1">
    <location>
        <position position="163"/>
    </location>
    <ligand>
        <name>1-deoxy-D-xylulose 5-phosphate</name>
        <dbReference type="ChEBI" id="CHEBI:57792"/>
    </ligand>
</feature>
<feature type="binding site" evidence="1">
    <location>
        <begin position="189"/>
        <end position="190"/>
    </location>
    <ligand>
        <name>1-deoxy-D-xylulose 5-phosphate</name>
        <dbReference type="ChEBI" id="CHEBI:57792"/>
    </ligand>
</feature>
<feature type="binding site" evidence="1">
    <location>
        <begin position="211"/>
        <end position="212"/>
    </location>
    <ligand>
        <name>1-deoxy-D-xylulose 5-phosphate</name>
        <dbReference type="ChEBI" id="CHEBI:57792"/>
    </ligand>
</feature>
<evidence type="ECO:0000255" key="1">
    <source>
        <dbReference type="HAMAP-Rule" id="MF_00443"/>
    </source>
</evidence>
<proteinExistence type="inferred from homology"/>
<gene>
    <name evidence="1" type="primary">thiG</name>
    <name type="ordered locus">Gura_3659</name>
</gene>
<dbReference type="EC" id="2.8.1.10" evidence="1"/>
<dbReference type="EMBL" id="CP000698">
    <property type="protein sequence ID" value="ABQ27812.1"/>
    <property type="molecule type" value="Genomic_DNA"/>
</dbReference>
<dbReference type="RefSeq" id="WP_011940466.1">
    <property type="nucleotide sequence ID" value="NC_009483.1"/>
</dbReference>
<dbReference type="SMR" id="A5G7P4"/>
<dbReference type="STRING" id="351605.Gura_3659"/>
<dbReference type="KEGG" id="gur:Gura_3659"/>
<dbReference type="HOGENOM" id="CLU_062233_1_0_7"/>
<dbReference type="OrthoDB" id="9805935at2"/>
<dbReference type="UniPathway" id="UPA00060"/>
<dbReference type="Proteomes" id="UP000006695">
    <property type="component" value="Chromosome"/>
</dbReference>
<dbReference type="GO" id="GO:0005737">
    <property type="term" value="C:cytoplasm"/>
    <property type="evidence" value="ECO:0007669"/>
    <property type="project" value="UniProtKB-SubCell"/>
</dbReference>
<dbReference type="GO" id="GO:1990107">
    <property type="term" value="F:thiazole synthase activity"/>
    <property type="evidence" value="ECO:0007669"/>
    <property type="project" value="UniProtKB-EC"/>
</dbReference>
<dbReference type="GO" id="GO:0009229">
    <property type="term" value="P:thiamine diphosphate biosynthetic process"/>
    <property type="evidence" value="ECO:0007669"/>
    <property type="project" value="UniProtKB-UniRule"/>
</dbReference>
<dbReference type="CDD" id="cd04728">
    <property type="entry name" value="ThiG"/>
    <property type="match status" value="1"/>
</dbReference>
<dbReference type="FunFam" id="3.20.20.70:FF:000049">
    <property type="entry name" value="Thiazole synthase"/>
    <property type="match status" value="1"/>
</dbReference>
<dbReference type="Gene3D" id="3.20.20.70">
    <property type="entry name" value="Aldolase class I"/>
    <property type="match status" value="1"/>
</dbReference>
<dbReference type="HAMAP" id="MF_00443">
    <property type="entry name" value="ThiG"/>
    <property type="match status" value="1"/>
</dbReference>
<dbReference type="InterPro" id="IPR013785">
    <property type="entry name" value="Aldolase_TIM"/>
</dbReference>
<dbReference type="InterPro" id="IPR033983">
    <property type="entry name" value="Thiazole_synthase_ThiG"/>
</dbReference>
<dbReference type="InterPro" id="IPR008867">
    <property type="entry name" value="ThiG"/>
</dbReference>
<dbReference type="PANTHER" id="PTHR34266">
    <property type="entry name" value="THIAZOLE SYNTHASE"/>
    <property type="match status" value="1"/>
</dbReference>
<dbReference type="PANTHER" id="PTHR34266:SF2">
    <property type="entry name" value="THIAZOLE SYNTHASE"/>
    <property type="match status" value="1"/>
</dbReference>
<dbReference type="Pfam" id="PF05690">
    <property type="entry name" value="ThiG"/>
    <property type="match status" value="1"/>
</dbReference>
<dbReference type="SUPFAM" id="SSF110399">
    <property type="entry name" value="ThiG-like"/>
    <property type="match status" value="1"/>
</dbReference>
<name>THIG_GEOUR</name>
<accession>A5G7P4</accession>
<organism>
    <name type="scientific">Geotalea uraniireducens (strain Rf4)</name>
    <name type="common">Geobacter uraniireducens</name>
    <dbReference type="NCBI Taxonomy" id="351605"/>
    <lineage>
        <taxon>Bacteria</taxon>
        <taxon>Pseudomonadati</taxon>
        <taxon>Thermodesulfobacteriota</taxon>
        <taxon>Desulfuromonadia</taxon>
        <taxon>Geobacterales</taxon>
        <taxon>Geobacteraceae</taxon>
        <taxon>Geotalea</taxon>
    </lineage>
</organism>
<comment type="function">
    <text evidence="1">Catalyzes the rearrangement of 1-deoxy-D-xylulose 5-phosphate (DXP) to produce the thiazole phosphate moiety of thiamine. Sulfur is provided by the thiocarboxylate moiety of the carrier protein ThiS. In vitro, sulfur can be provided by H(2)S.</text>
</comment>
<comment type="catalytic activity">
    <reaction evidence="1">
        <text>[ThiS sulfur-carrier protein]-C-terminal-Gly-aminoethanethioate + 2-iminoacetate + 1-deoxy-D-xylulose 5-phosphate = [ThiS sulfur-carrier protein]-C-terminal Gly-Gly + 2-[(2R,5Z)-2-carboxy-4-methylthiazol-5(2H)-ylidene]ethyl phosphate + 2 H2O + H(+)</text>
        <dbReference type="Rhea" id="RHEA:26297"/>
        <dbReference type="Rhea" id="RHEA-COMP:12909"/>
        <dbReference type="Rhea" id="RHEA-COMP:19908"/>
        <dbReference type="ChEBI" id="CHEBI:15377"/>
        <dbReference type="ChEBI" id="CHEBI:15378"/>
        <dbReference type="ChEBI" id="CHEBI:57792"/>
        <dbReference type="ChEBI" id="CHEBI:62899"/>
        <dbReference type="ChEBI" id="CHEBI:77846"/>
        <dbReference type="ChEBI" id="CHEBI:90778"/>
        <dbReference type="ChEBI" id="CHEBI:232372"/>
        <dbReference type="EC" id="2.8.1.10"/>
    </reaction>
</comment>
<comment type="pathway">
    <text evidence="1">Cofactor biosynthesis; thiamine diphosphate biosynthesis.</text>
</comment>
<comment type="subunit">
    <text evidence="1">Homotetramer. Forms heterodimers with either ThiH or ThiS.</text>
</comment>
<comment type="subcellular location">
    <subcellularLocation>
        <location evidence="1">Cytoplasm</location>
    </subcellularLocation>
</comment>
<comment type="similarity">
    <text evidence="1">Belongs to the ThiG family.</text>
</comment>